<evidence type="ECO:0000255" key="1">
    <source>
        <dbReference type="HAMAP-Rule" id="MF_00006"/>
    </source>
</evidence>
<comment type="catalytic activity">
    <reaction evidence="1">
        <text>2-(N(omega)-L-arginino)succinate = fumarate + L-arginine</text>
        <dbReference type="Rhea" id="RHEA:24020"/>
        <dbReference type="ChEBI" id="CHEBI:29806"/>
        <dbReference type="ChEBI" id="CHEBI:32682"/>
        <dbReference type="ChEBI" id="CHEBI:57472"/>
        <dbReference type="EC" id="4.3.2.1"/>
    </reaction>
</comment>
<comment type="pathway">
    <text evidence="1">Amino-acid biosynthesis; L-arginine biosynthesis; L-arginine from L-ornithine and carbamoyl phosphate: step 3/3.</text>
</comment>
<comment type="subcellular location">
    <subcellularLocation>
        <location evidence="1">Cytoplasm</location>
    </subcellularLocation>
</comment>
<comment type="similarity">
    <text evidence="1">Belongs to the lyase 1 family. Argininosuccinate lyase subfamily.</text>
</comment>
<feature type="chain" id="PRO_0000137866" description="Argininosuccinate lyase">
    <location>
        <begin position="1"/>
        <end position="468"/>
    </location>
</feature>
<sequence length="468" mass="52440">MNLRAGRLNSGMEDEAAEFTSSLTFDHHIFEADIECNMAHTRMLAHEGIIPEEVAAKIIDALESLREEGIEALDMDPSVEDIHMAVENYVTARIGEEAGFMHTGKSRNDQVATDLRLALRERIRTISRELLDFIDSISDLALDHTETVMVGYTHLQHAQPTTLGHHLMAYASSLRRDYERLQDTLKRVDQNPLGSAAMTTTSFPINRELTTRLLGFSDYMKNSMDAVSARDFIAETVFDLSMLAVNLSRISEEMILWSTHEFGIVEIPDEFSSTSSIMPQKKNPDVAEIARAKTSTVQGELVTILGIMKALPYTYNRDLQEVTPHLWRAVDTVLSMIRVVRGMLLGIRVNRNRALELAGANFATATDLADIIVRERGIPFRVAHRIVGRLVTRAIEDGLAPGDVDSVYLDEVSLEVTGRKLELDPELVEKALDPLENVRMRRIPGGPAPEMVRVAVEEMKSFIESERK</sequence>
<dbReference type="EC" id="4.3.2.1" evidence="1"/>
<dbReference type="EMBL" id="AE000666">
    <property type="protein sequence ID" value="AAB84775.1"/>
    <property type="molecule type" value="Genomic_DNA"/>
</dbReference>
<dbReference type="PIR" id="H69133">
    <property type="entry name" value="H69133"/>
</dbReference>
<dbReference type="RefSeq" id="WP_010875908.1">
    <property type="nucleotide sequence ID" value="NC_000916.1"/>
</dbReference>
<dbReference type="SMR" id="O26369"/>
<dbReference type="FunCoup" id="O26369">
    <property type="interactions" value="183"/>
</dbReference>
<dbReference type="STRING" id="187420.MTH_269"/>
<dbReference type="PaxDb" id="187420-MTH_269"/>
<dbReference type="EnsemblBacteria" id="AAB84775">
    <property type="protein sequence ID" value="AAB84775"/>
    <property type="gene ID" value="MTH_269"/>
</dbReference>
<dbReference type="GeneID" id="1470230"/>
<dbReference type="KEGG" id="mth:MTH_269"/>
<dbReference type="PATRIC" id="fig|187420.15.peg.238"/>
<dbReference type="HOGENOM" id="CLU_027272_2_3_2"/>
<dbReference type="InParanoid" id="O26369"/>
<dbReference type="UniPathway" id="UPA00068">
    <property type="reaction ID" value="UER00114"/>
</dbReference>
<dbReference type="Proteomes" id="UP000005223">
    <property type="component" value="Chromosome"/>
</dbReference>
<dbReference type="GO" id="GO:0005829">
    <property type="term" value="C:cytosol"/>
    <property type="evidence" value="ECO:0007669"/>
    <property type="project" value="TreeGrafter"/>
</dbReference>
<dbReference type="GO" id="GO:0004056">
    <property type="term" value="F:argininosuccinate lyase activity"/>
    <property type="evidence" value="ECO:0007669"/>
    <property type="project" value="UniProtKB-UniRule"/>
</dbReference>
<dbReference type="GO" id="GO:0042450">
    <property type="term" value="P:arginine biosynthetic process via ornithine"/>
    <property type="evidence" value="ECO:0007669"/>
    <property type="project" value="InterPro"/>
</dbReference>
<dbReference type="GO" id="GO:0006526">
    <property type="term" value="P:L-arginine biosynthetic process"/>
    <property type="evidence" value="ECO:0007669"/>
    <property type="project" value="UniProtKB-UniRule"/>
</dbReference>
<dbReference type="CDD" id="cd01359">
    <property type="entry name" value="Argininosuccinate_lyase"/>
    <property type="match status" value="1"/>
</dbReference>
<dbReference type="FunFam" id="1.20.200.10:FF:000015">
    <property type="entry name" value="argininosuccinate lyase isoform X2"/>
    <property type="match status" value="1"/>
</dbReference>
<dbReference type="Gene3D" id="1.10.40.30">
    <property type="entry name" value="Fumarase/aspartase (C-terminal domain)"/>
    <property type="match status" value="1"/>
</dbReference>
<dbReference type="Gene3D" id="1.20.200.10">
    <property type="entry name" value="Fumarase/aspartase (Central domain)"/>
    <property type="match status" value="1"/>
</dbReference>
<dbReference type="Gene3D" id="1.10.275.10">
    <property type="entry name" value="Fumarase/aspartase (N-terminal domain)"/>
    <property type="match status" value="1"/>
</dbReference>
<dbReference type="HAMAP" id="MF_00006">
    <property type="entry name" value="Arg_succ_lyase"/>
    <property type="match status" value="1"/>
</dbReference>
<dbReference type="InterPro" id="IPR029419">
    <property type="entry name" value="Arg_succ_lyase_C"/>
</dbReference>
<dbReference type="InterPro" id="IPR009049">
    <property type="entry name" value="Argininosuccinate_lyase"/>
</dbReference>
<dbReference type="InterPro" id="IPR024083">
    <property type="entry name" value="Fumarase/histidase_N"/>
</dbReference>
<dbReference type="InterPro" id="IPR000362">
    <property type="entry name" value="Fumarate_lyase_fam"/>
</dbReference>
<dbReference type="InterPro" id="IPR022761">
    <property type="entry name" value="Fumarate_lyase_N"/>
</dbReference>
<dbReference type="InterPro" id="IPR008948">
    <property type="entry name" value="L-Aspartase-like"/>
</dbReference>
<dbReference type="NCBIfam" id="TIGR00838">
    <property type="entry name" value="argH"/>
    <property type="match status" value="1"/>
</dbReference>
<dbReference type="PANTHER" id="PTHR43814">
    <property type="entry name" value="ARGININOSUCCINATE LYASE"/>
    <property type="match status" value="1"/>
</dbReference>
<dbReference type="PANTHER" id="PTHR43814:SF1">
    <property type="entry name" value="ARGININOSUCCINATE LYASE"/>
    <property type="match status" value="1"/>
</dbReference>
<dbReference type="Pfam" id="PF14698">
    <property type="entry name" value="ASL_C2"/>
    <property type="match status" value="1"/>
</dbReference>
<dbReference type="Pfam" id="PF00206">
    <property type="entry name" value="Lyase_1"/>
    <property type="match status" value="1"/>
</dbReference>
<dbReference type="PRINTS" id="PR00145">
    <property type="entry name" value="ARGSUCLYASE"/>
</dbReference>
<dbReference type="PRINTS" id="PR00149">
    <property type="entry name" value="FUMRATELYASE"/>
</dbReference>
<dbReference type="SUPFAM" id="SSF48557">
    <property type="entry name" value="L-aspartase-like"/>
    <property type="match status" value="1"/>
</dbReference>
<proteinExistence type="inferred from homology"/>
<accession>O26369</accession>
<gene>
    <name evidence="1" type="primary">argH</name>
    <name type="ordered locus">MTH_269</name>
</gene>
<reference key="1">
    <citation type="journal article" date="1997" name="J. Bacteriol.">
        <title>Complete genome sequence of Methanobacterium thermoautotrophicum deltaH: functional analysis and comparative genomics.</title>
        <authorList>
            <person name="Smith D.R."/>
            <person name="Doucette-Stamm L.A."/>
            <person name="Deloughery C."/>
            <person name="Lee H.-M."/>
            <person name="Dubois J."/>
            <person name="Aldredge T."/>
            <person name="Bashirzadeh R."/>
            <person name="Blakely D."/>
            <person name="Cook R."/>
            <person name="Gilbert K."/>
            <person name="Harrison D."/>
            <person name="Hoang L."/>
            <person name="Keagle P."/>
            <person name="Lumm W."/>
            <person name="Pothier B."/>
            <person name="Qiu D."/>
            <person name="Spadafora R."/>
            <person name="Vicare R."/>
            <person name="Wang Y."/>
            <person name="Wierzbowski J."/>
            <person name="Gibson R."/>
            <person name="Jiwani N."/>
            <person name="Caruso A."/>
            <person name="Bush D."/>
            <person name="Safer H."/>
            <person name="Patwell D."/>
            <person name="Prabhakar S."/>
            <person name="McDougall S."/>
            <person name="Shimer G."/>
            <person name="Goyal A."/>
            <person name="Pietrovski S."/>
            <person name="Church G.M."/>
            <person name="Daniels C.J."/>
            <person name="Mao J.-I."/>
            <person name="Rice P."/>
            <person name="Noelling J."/>
            <person name="Reeve J.N."/>
        </authorList>
    </citation>
    <scope>NUCLEOTIDE SEQUENCE [LARGE SCALE GENOMIC DNA]</scope>
    <source>
        <strain>ATCC 29096 / DSM 1053 / JCM 10044 / NBRC 100330 / Delta H</strain>
    </source>
</reference>
<organism>
    <name type="scientific">Methanothermobacter thermautotrophicus (strain ATCC 29096 / DSM 1053 / JCM 10044 / NBRC 100330 / Delta H)</name>
    <name type="common">Methanobacterium thermoautotrophicum</name>
    <dbReference type="NCBI Taxonomy" id="187420"/>
    <lineage>
        <taxon>Archaea</taxon>
        <taxon>Methanobacteriati</taxon>
        <taxon>Methanobacteriota</taxon>
        <taxon>Methanomada group</taxon>
        <taxon>Methanobacteria</taxon>
        <taxon>Methanobacteriales</taxon>
        <taxon>Methanobacteriaceae</taxon>
        <taxon>Methanothermobacter</taxon>
    </lineage>
</organism>
<keyword id="KW-0028">Amino-acid biosynthesis</keyword>
<keyword id="KW-0055">Arginine biosynthesis</keyword>
<keyword id="KW-0963">Cytoplasm</keyword>
<keyword id="KW-0456">Lyase</keyword>
<keyword id="KW-1185">Reference proteome</keyword>
<name>ARLY_METTH</name>
<protein>
    <recommendedName>
        <fullName evidence="1">Argininosuccinate lyase</fullName>
        <shortName evidence="1">ASAL</shortName>
        <ecNumber evidence="1">4.3.2.1</ecNumber>
    </recommendedName>
    <alternativeName>
        <fullName evidence="1">Arginosuccinase</fullName>
    </alternativeName>
</protein>